<sequence length="408" mass="47089">MSSKKRKSPPQESLTSYFEKSSKSSKKYGSQNKDSDSSSTCLQQKIEIQWSITDSLYIAKYGKLKKTKKFIAFDLDGTLIKTKSGRVFSKDAADWTWWHPSVVPKLKALYQDNYSLVIFSNQNGIPRKPSAGHTFQMKIRAIFESLDLPIVLYAAILKDKFRKPLTGMWNSFLKDVNRSIDLSFIKYVGDAAGRPGDHNSTDLKFAENIGIKFETPEQFFLGHSFVPPNFESFHPKNYLVRNSSSHPYHFKKSEHQEIVVLVGFPSSGKSTLAESQIVTQGYERVNQDILKTKSKCIKAAIEALKKEKSVVIDNTNPTIESRKMWIDIAQEFEIPIRCIHLQSSEELARHNNVFRYIHHNQKQLPEIAFNSFKSRFQMPTVEEGFTNVEEVPFKCLKDYEDTWNYWYE</sequence>
<evidence type="ECO:0000255" key="1"/>
<evidence type="ECO:0000256" key="2">
    <source>
        <dbReference type="SAM" id="MobiDB-lite"/>
    </source>
</evidence>
<evidence type="ECO:0000269" key="3">
    <source>
    </source>
</evidence>
<evidence type="ECO:0000269" key="4">
    <source>
    </source>
</evidence>
<evidence type="ECO:0000269" key="5">
    <source>
    </source>
</evidence>
<evidence type="ECO:0000305" key="6"/>
<evidence type="ECO:0000305" key="7">
    <source>
    </source>
</evidence>
<comment type="function">
    <text evidence="3">Catalyzes the phosphorylation of DNA at 5'-hydroxyl termini and can dephosphorylate its 3'-phosphate termini. Has a role in the repair of breaks in single-stranded DNA.</text>
</comment>
<comment type="catalytic activity">
    <reaction evidence="3">
        <text>a 3'end (2'-deoxyribonucleotide 3'-phosphate)-DNA + H2O = a 3'-end 2'-deoxyribonucleotide-DNA + phosphate</text>
        <dbReference type="Rhea" id="RHEA:14113"/>
        <dbReference type="Rhea" id="RHEA-COMP:13863"/>
        <dbReference type="Rhea" id="RHEA-COMP:13864"/>
        <dbReference type="ChEBI" id="CHEBI:15377"/>
        <dbReference type="ChEBI" id="CHEBI:43474"/>
        <dbReference type="ChEBI" id="CHEBI:138147"/>
        <dbReference type="ChEBI" id="CHEBI:138148"/>
        <dbReference type="EC" id="3.1.3.32"/>
    </reaction>
    <physiologicalReaction direction="left-to-right" evidence="7">
        <dbReference type="Rhea" id="RHEA:14114"/>
    </physiologicalReaction>
</comment>
<comment type="catalytic activity">
    <reaction evidence="3">
        <text>a 5'-end dephospho-2'-deoxyribonucleoside-DNA + ATP = a 5'-end 5'-phospho-2'-deoxyribonucleoside-DNA + ADP + H(+)</text>
        <dbReference type="Rhea" id="RHEA:15669"/>
        <dbReference type="Rhea" id="RHEA-COMP:13180"/>
        <dbReference type="Rhea" id="RHEA-COMP:13184"/>
        <dbReference type="ChEBI" id="CHEBI:15378"/>
        <dbReference type="ChEBI" id="CHEBI:30616"/>
        <dbReference type="ChEBI" id="CHEBI:136412"/>
        <dbReference type="ChEBI" id="CHEBI:136416"/>
        <dbReference type="ChEBI" id="CHEBI:456216"/>
        <dbReference type="EC" id="2.7.1.78"/>
    </reaction>
    <physiologicalReaction direction="left-to-right" evidence="7">
        <dbReference type="Rhea" id="RHEA:15670"/>
    </physiologicalReaction>
</comment>
<comment type="subcellular location">
    <subcellularLocation>
        <location evidence="3 4">Nucleus</location>
    </subcellularLocation>
</comment>
<comment type="similarity">
    <text evidence="6">In the N-terminal section; belongs to the DNA 3' phosphatase family.</text>
</comment>
<protein>
    <recommendedName>
        <fullName>Bifunctional polynucleotide phosphatase/kinase</fullName>
    </recommendedName>
    <alternativeName>
        <fullName>DNA 5'-kinase/3'-phosphatase</fullName>
    </alternativeName>
    <alternativeName>
        <fullName>Polynucleotide kinase-3'-phosphatase</fullName>
    </alternativeName>
    <domain>
        <recommendedName>
            <fullName>Polynucleotide 3'-phosphatase</fullName>
            <ecNumber evidence="3">3.1.3.32</ecNumber>
        </recommendedName>
        <alternativeName>
            <fullName>2'(3')-polynucleotidase</fullName>
        </alternativeName>
    </domain>
    <domain>
        <recommendedName>
            <fullName>Polynucleotide 5'-hydroxyl-kinase</fullName>
            <ecNumber evidence="3">2.7.1.78</ecNumber>
        </recommendedName>
    </domain>
</protein>
<proteinExistence type="evidence at protein level"/>
<name>PNK1_SCHPO</name>
<keyword id="KW-0067">ATP-binding</keyword>
<keyword id="KW-0227">DNA damage</keyword>
<keyword id="KW-0234">DNA repair</keyword>
<keyword id="KW-0378">Hydrolase</keyword>
<keyword id="KW-0418">Kinase</keyword>
<keyword id="KW-0511">Multifunctional enzyme</keyword>
<keyword id="KW-0547">Nucleotide-binding</keyword>
<keyword id="KW-0539">Nucleus</keyword>
<keyword id="KW-0597">Phosphoprotein</keyword>
<keyword id="KW-1185">Reference proteome</keyword>
<keyword id="KW-0808">Transferase</keyword>
<accession>O13911</accession>
<dbReference type="EC" id="3.1.3.32" evidence="3"/>
<dbReference type="EC" id="2.7.1.78" evidence="3"/>
<dbReference type="EMBL" id="CU329670">
    <property type="protein sequence ID" value="CAB11157.2"/>
    <property type="molecule type" value="Genomic_DNA"/>
</dbReference>
<dbReference type="PIR" id="T38242">
    <property type="entry name" value="T38242"/>
</dbReference>
<dbReference type="RefSeq" id="NP_593635.2">
    <property type="nucleotide sequence ID" value="NM_001019066.2"/>
</dbReference>
<dbReference type="SMR" id="O13911"/>
<dbReference type="BioGRID" id="278514">
    <property type="interactions" value="187"/>
</dbReference>
<dbReference type="FunCoup" id="O13911">
    <property type="interactions" value="169"/>
</dbReference>
<dbReference type="STRING" id="284812.O13911"/>
<dbReference type="iPTMnet" id="O13911"/>
<dbReference type="PaxDb" id="4896-SPAC23C11.04c.1"/>
<dbReference type="EnsemblFungi" id="SPAC23C11.04c.1">
    <property type="protein sequence ID" value="SPAC23C11.04c.1:pep"/>
    <property type="gene ID" value="SPAC23C11.04c"/>
</dbReference>
<dbReference type="GeneID" id="2542032"/>
<dbReference type="KEGG" id="spo:2542032"/>
<dbReference type="PomBase" id="SPAC23C11.04c">
    <property type="gene designation" value="pnk1"/>
</dbReference>
<dbReference type="VEuPathDB" id="FungiDB:SPAC23C11.04c"/>
<dbReference type="eggNOG" id="KOG2134">
    <property type="taxonomic scope" value="Eukaryota"/>
</dbReference>
<dbReference type="HOGENOM" id="CLU_014938_3_1_1"/>
<dbReference type="InParanoid" id="O13911"/>
<dbReference type="OMA" id="SDRMFAA"/>
<dbReference type="BRENDA" id="3.1.3.32">
    <property type="organism ID" value="5613"/>
</dbReference>
<dbReference type="PRO" id="PR:O13911"/>
<dbReference type="Proteomes" id="UP000002485">
    <property type="component" value="Chromosome I"/>
</dbReference>
<dbReference type="GO" id="GO:0005730">
    <property type="term" value="C:nucleolus"/>
    <property type="evidence" value="ECO:0007005"/>
    <property type="project" value="PomBase"/>
</dbReference>
<dbReference type="GO" id="GO:0005634">
    <property type="term" value="C:nucleus"/>
    <property type="evidence" value="ECO:0000314"/>
    <property type="project" value="PomBase"/>
</dbReference>
<dbReference type="GO" id="GO:0005524">
    <property type="term" value="F:ATP binding"/>
    <property type="evidence" value="ECO:0007669"/>
    <property type="project" value="UniProtKB-KW"/>
</dbReference>
<dbReference type="GO" id="GO:0046404">
    <property type="term" value="F:ATP-dependent polydeoxyribonucleotide 5'-hydroxyl-kinase activity"/>
    <property type="evidence" value="ECO:0000314"/>
    <property type="project" value="PomBase"/>
</dbReference>
<dbReference type="GO" id="GO:0046403">
    <property type="term" value="F:polynucleotide 3'-phosphatase activity"/>
    <property type="evidence" value="ECO:0000314"/>
    <property type="project" value="PomBase"/>
</dbReference>
<dbReference type="GO" id="GO:0006284">
    <property type="term" value="P:base-excision repair"/>
    <property type="evidence" value="ECO:0000315"/>
    <property type="project" value="PomBase"/>
</dbReference>
<dbReference type="GO" id="GO:0006281">
    <property type="term" value="P:DNA repair"/>
    <property type="evidence" value="ECO:0000318"/>
    <property type="project" value="GO_Central"/>
</dbReference>
<dbReference type="GO" id="GO:0000012">
    <property type="term" value="P:single strand break repair"/>
    <property type="evidence" value="ECO:0000314"/>
    <property type="project" value="PomBase"/>
</dbReference>
<dbReference type="CDD" id="cd01625">
    <property type="entry name" value="HAD_PNP"/>
    <property type="match status" value="1"/>
</dbReference>
<dbReference type="FunFam" id="3.40.50.300:FF:000737">
    <property type="entry name" value="Bifunctional polynucleotide phosphatase/kinase"/>
    <property type="match status" value="1"/>
</dbReference>
<dbReference type="Gene3D" id="3.40.50.1000">
    <property type="entry name" value="HAD superfamily/HAD-like"/>
    <property type="match status" value="1"/>
</dbReference>
<dbReference type="Gene3D" id="3.40.50.300">
    <property type="entry name" value="P-loop containing nucleotide triphosphate hydrolases"/>
    <property type="match status" value="1"/>
</dbReference>
<dbReference type="InterPro" id="IPR036412">
    <property type="entry name" value="HAD-like_sf"/>
</dbReference>
<dbReference type="InterPro" id="IPR006549">
    <property type="entry name" value="HAD-SF_hydro_IIIA"/>
</dbReference>
<dbReference type="InterPro" id="IPR023214">
    <property type="entry name" value="HAD_sf"/>
</dbReference>
<dbReference type="InterPro" id="IPR027417">
    <property type="entry name" value="P-loop_NTPase"/>
</dbReference>
<dbReference type="InterPro" id="IPR013954">
    <property type="entry name" value="PNK3P"/>
</dbReference>
<dbReference type="InterPro" id="IPR006551">
    <property type="entry name" value="Polynucleotide_phosphatase"/>
</dbReference>
<dbReference type="NCBIfam" id="TIGR01664">
    <property type="entry name" value="DNA-3'-Pase"/>
    <property type="match status" value="1"/>
</dbReference>
<dbReference type="NCBIfam" id="TIGR01662">
    <property type="entry name" value="HAD-SF-IIIA"/>
    <property type="match status" value="1"/>
</dbReference>
<dbReference type="PANTHER" id="PTHR12083">
    <property type="entry name" value="BIFUNCTIONAL POLYNUCLEOTIDE PHOSPHATASE/KINASE"/>
    <property type="match status" value="1"/>
</dbReference>
<dbReference type="PANTHER" id="PTHR12083:SF9">
    <property type="entry name" value="BIFUNCTIONAL POLYNUCLEOTIDE PHOSPHATASE_KINASE"/>
    <property type="match status" value="1"/>
</dbReference>
<dbReference type="Pfam" id="PF13671">
    <property type="entry name" value="AAA_33"/>
    <property type="match status" value="1"/>
</dbReference>
<dbReference type="Pfam" id="PF08645">
    <property type="entry name" value="PNK3P"/>
    <property type="match status" value="1"/>
</dbReference>
<dbReference type="SUPFAM" id="SSF56784">
    <property type="entry name" value="HAD-like"/>
    <property type="match status" value="1"/>
</dbReference>
<dbReference type="SUPFAM" id="SSF52540">
    <property type="entry name" value="P-loop containing nucleoside triphosphate hydrolases"/>
    <property type="match status" value="1"/>
</dbReference>
<organism>
    <name type="scientific">Schizosaccharomyces pombe (strain 972 / ATCC 24843)</name>
    <name type="common">Fission yeast</name>
    <dbReference type="NCBI Taxonomy" id="284812"/>
    <lineage>
        <taxon>Eukaryota</taxon>
        <taxon>Fungi</taxon>
        <taxon>Dikarya</taxon>
        <taxon>Ascomycota</taxon>
        <taxon>Taphrinomycotina</taxon>
        <taxon>Schizosaccharomycetes</taxon>
        <taxon>Schizosaccharomycetales</taxon>
        <taxon>Schizosaccharomycetaceae</taxon>
        <taxon>Schizosaccharomyces</taxon>
    </lineage>
</organism>
<feature type="chain" id="PRO_0000058477" description="Bifunctional polynucleotide phosphatase/kinase">
    <location>
        <begin position="1"/>
        <end position="408"/>
    </location>
</feature>
<feature type="region of interest" description="Disordered" evidence="2">
    <location>
        <begin position="1"/>
        <end position="38"/>
    </location>
</feature>
<feature type="compositionally biased region" description="Polar residues" evidence="2">
    <location>
        <begin position="10"/>
        <end position="19"/>
    </location>
</feature>
<feature type="compositionally biased region" description="Polar residues" evidence="2">
    <location>
        <begin position="28"/>
        <end position="38"/>
    </location>
</feature>
<feature type="binding site" evidence="1">
    <location>
        <begin position="263"/>
        <end position="270"/>
    </location>
    <ligand>
        <name>ATP</name>
        <dbReference type="ChEBI" id="CHEBI:30616"/>
    </ligand>
</feature>
<feature type="modified residue" description="Phosphoserine" evidence="5">
    <location>
        <position position="8"/>
    </location>
</feature>
<reference key="1">
    <citation type="journal article" date="2002" name="J. Biol. Chem.">
        <title>Pnk1, a DNA kinase/phosphatase required for normal response to DNA damage by gamma-radiation or camptothecin in Schizosaccharomyces pombe.</title>
        <authorList>
            <person name="Meijer M."/>
            <person name="Karimi-Busheri F."/>
            <person name="Huang T.Y."/>
            <person name="Weinfeld M."/>
            <person name="Young D."/>
        </authorList>
    </citation>
    <scope>NUCLEOTIDE SEQUENCE [GENOMIC DNA]</scope>
    <scope>FUNCTION</scope>
    <scope>CATALYTIC ACTIVITY</scope>
    <scope>SUBCELLULAR LOCATION</scope>
</reference>
<reference key="2">
    <citation type="journal article" date="2002" name="Nature">
        <title>The genome sequence of Schizosaccharomyces pombe.</title>
        <authorList>
            <person name="Wood V."/>
            <person name="Gwilliam R."/>
            <person name="Rajandream M.A."/>
            <person name="Lyne M.H."/>
            <person name="Lyne R."/>
            <person name="Stewart A."/>
            <person name="Sgouros J.G."/>
            <person name="Peat N."/>
            <person name="Hayles J."/>
            <person name="Baker S.G."/>
            <person name="Basham D."/>
            <person name="Bowman S."/>
            <person name="Brooks K."/>
            <person name="Brown D."/>
            <person name="Brown S."/>
            <person name="Chillingworth T."/>
            <person name="Churcher C.M."/>
            <person name="Collins M."/>
            <person name="Connor R."/>
            <person name="Cronin A."/>
            <person name="Davis P."/>
            <person name="Feltwell T."/>
            <person name="Fraser A."/>
            <person name="Gentles S."/>
            <person name="Goble A."/>
            <person name="Hamlin N."/>
            <person name="Harris D.E."/>
            <person name="Hidalgo J."/>
            <person name="Hodgson G."/>
            <person name="Holroyd S."/>
            <person name="Hornsby T."/>
            <person name="Howarth S."/>
            <person name="Huckle E.J."/>
            <person name="Hunt S."/>
            <person name="Jagels K."/>
            <person name="James K.D."/>
            <person name="Jones L."/>
            <person name="Jones M."/>
            <person name="Leather S."/>
            <person name="McDonald S."/>
            <person name="McLean J."/>
            <person name="Mooney P."/>
            <person name="Moule S."/>
            <person name="Mungall K.L."/>
            <person name="Murphy L.D."/>
            <person name="Niblett D."/>
            <person name="Odell C."/>
            <person name="Oliver K."/>
            <person name="O'Neil S."/>
            <person name="Pearson D."/>
            <person name="Quail M.A."/>
            <person name="Rabbinowitsch E."/>
            <person name="Rutherford K.M."/>
            <person name="Rutter S."/>
            <person name="Saunders D."/>
            <person name="Seeger K."/>
            <person name="Sharp S."/>
            <person name="Skelton J."/>
            <person name="Simmonds M.N."/>
            <person name="Squares R."/>
            <person name="Squares S."/>
            <person name="Stevens K."/>
            <person name="Taylor K."/>
            <person name="Taylor R.G."/>
            <person name="Tivey A."/>
            <person name="Walsh S.V."/>
            <person name="Warren T."/>
            <person name="Whitehead S."/>
            <person name="Woodward J.R."/>
            <person name="Volckaert G."/>
            <person name="Aert R."/>
            <person name="Robben J."/>
            <person name="Grymonprez B."/>
            <person name="Weltjens I."/>
            <person name="Vanstreels E."/>
            <person name="Rieger M."/>
            <person name="Schaefer M."/>
            <person name="Mueller-Auer S."/>
            <person name="Gabel C."/>
            <person name="Fuchs M."/>
            <person name="Duesterhoeft A."/>
            <person name="Fritzc C."/>
            <person name="Holzer E."/>
            <person name="Moestl D."/>
            <person name="Hilbert H."/>
            <person name="Borzym K."/>
            <person name="Langer I."/>
            <person name="Beck A."/>
            <person name="Lehrach H."/>
            <person name="Reinhardt R."/>
            <person name="Pohl T.M."/>
            <person name="Eger P."/>
            <person name="Zimmermann W."/>
            <person name="Wedler H."/>
            <person name="Wambutt R."/>
            <person name="Purnelle B."/>
            <person name="Goffeau A."/>
            <person name="Cadieu E."/>
            <person name="Dreano S."/>
            <person name="Gloux S."/>
            <person name="Lelaure V."/>
            <person name="Mottier S."/>
            <person name="Galibert F."/>
            <person name="Aves S.J."/>
            <person name="Xiang Z."/>
            <person name="Hunt C."/>
            <person name="Moore K."/>
            <person name="Hurst S.M."/>
            <person name="Lucas M."/>
            <person name="Rochet M."/>
            <person name="Gaillardin C."/>
            <person name="Tallada V.A."/>
            <person name="Garzon A."/>
            <person name="Thode G."/>
            <person name="Daga R.R."/>
            <person name="Cruzado L."/>
            <person name="Jimenez J."/>
            <person name="Sanchez M."/>
            <person name="del Rey F."/>
            <person name="Benito J."/>
            <person name="Dominguez A."/>
            <person name="Revuelta J.L."/>
            <person name="Moreno S."/>
            <person name="Armstrong J."/>
            <person name="Forsburg S.L."/>
            <person name="Cerutti L."/>
            <person name="Lowe T."/>
            <person name="McCombie W.R."/>
            <person name="Paulsen I."/>
            <person name="Potashkin J."/>
            <person name="Shpakovski G.V."/>
            <person name="Ussery D."/>
            <person name="Barrell B.G."/>
            <person name="Nurse P."/>
        </authorList>
    </citation>
    <scope>NUCLEOTIDE SEQUENCE [LARGE SCALE GENOMIC DNA]</scope>
    <source>
        <strain>972 / ATCC 24843</strain>
    </source>
</reference>
<reference key="3">
    <citation type="journal article" date="2011" name="Science">
        <title>Comparative functional genomics of the fission yeasts.</title>
        <authorList>
            <person name="Rhind N."/>
            <person name="Chen Z."/>
            <person name="Yassour M."/>
            <person name="Thompson D.A."/>
            <person name="Haas B.J."/>
            <person name="Habib N."/>
            <person name="Wapinski I."/>
            <person name="Roy S."/>
            <person name="Lin M.F."/>
            <person name="Heiman D.I."/>
            <person name="Young S.K."/>
            <person name="Furuya K."/>
            <person name="Guo Y."/>
            <person name="Pidoux A."/>
            <person name="Chen H.M."/>
            <person name="Robbertse B."/>
            <person name="Goldberg J.M."/>
            <person name="Aoki K."/>
            <person name="Bayne E.H."/>
            <person name="Berlin A.M."/>
            <person name="Desjardins C.A."/>
            <person name="Dobbs E."/>
            <person name="Dukaj L."/>
            <person name="Fan L."/>
            <person name="FitzGerald M.G."/>
            <person name="French C."/>
            <person name="Gujja S."/>
            <person name="Hansen K."/>
            <person name="Keifenheim D."/>
            <person name="Levin J.Z."/>
            <person name="Mosher R.A."/>
            <person name="Mueller C.A."/>
            <person name="Pfiffner J."/>
            <person name="Priest M."/>
            <person name="Russ C."/>
            <person name="Smialowska A."/>
            <person name="Swoboda P."/>
            <person name="Sykes S.M."/>
            <person name="Vaughn M."/>
            <person name="Vengrova S."/>
            <person name="Yoder R."/>
            <person name="Zeng Q."/>
            <person name="Allshire R."/>
            <person name="Baulcombe D."/>
            <person name="Birren B.W."/>
            <person name="Brown W."/>
            <person name="Ekwall K."/>
            <person name="Kellis M."/>
            <person name="Leatherwood J."/>
            <person name="Levin H."/>
            <person name="Margalit H."/>
            <person name="Martienssen R."/>
            <person name="Nieduszynski C.A."/>
            <person name="Spatafora J.W."/>
            <person name="Friedman N."/>
            <person name="Dalgaard J.Z."/>
            <person name="Baumann P."/>
            <person name="Niki H."/>
            <person name="Regev A."/>
            <person name="Nusbaum C."/>
        </authorList>
    </citation>
    <scope>REVISION OF GENE MODEL</scope>
</reference>
<reference key="4">
    <citation type="journal article" date="2006" name="Nat. Biotechnol.">
        <title>ORFeome cloning and global analysis of protein localization in the fission yeast Schizosaccharomyces pombe.</title>
        <authorList>
            <person name="Matsuyama A."/>
            <person name="Arai R."/>
            <person name="Yashiroda Y."/>
            <person name="Shirai A."/>
            <person name="Kamata A."/>
            <person name="Sekido S."/>
            <person name="Kobayashi Y."/>
            <person name="Hashimoto A."/>
            <person name="Hamamoto M."/>
            <person name="Hiraoka Y."/>
            <person name="Horinouchi S."/>
            <person name="Yoshida M."/>
        </authorList>
    </citation>
    <scope>SUBCELLULAR LOCATION [LARGE SCALE ANALYSIS]</scope>
</reference>
<reference key="5">
    <citation type="journal article" date="2008" name="J. Proteome Res.">
        <title>Phosphoproteome analysis of fission yeast.</title>
        <authorList>
            <person name="Wilson-Grady J.T."/>
            <person name="Villen J."/>
            <person name="Gygi S.P."/>
        </authorList>
    </citation>
    <scope>PHOSPHORYLATION [LARGE SCALE ANALYSIS] AT SER-8</scope>
    <scope>IDENTIFICATION BY MASS SPECTROMETRY</scope>
</reference>
<gene>
    <name type="primary">pnk1</name>
    <name type="ORF">SPAC23C11.04c</name>
</gene>